<organism>
    <name type="scientific">Aspergillus clavatus (strain ATCC 1007 / CBS 513.65 / DSM 816 / NCTC 3887 / NRRL 1 / QM 1276 / 107)</name>
    <dbReference type="NCBI Taxonomy" id="344612"/>
    <lineage>
        <taxon>Eukaryota</taxon>
        <taxon>Fungi</taxon>
        <taxon>Dikarya</taxon>
        <taxon>Ascomycota</taxon>
        <taxon>Pezizomycotina</taxon>
        <taxon>Eurotiomycetes</taxon>
        <taxon>Eurotiomycetidae</taxon>
        <taxon>Eurotiales</taxon>
        <taxon>Aspergillaceae</taxon>
        <taxon>Aspergillus</taxon>
        <taxon>Aspergillus subgen. Fumigati</taxon>
    </lineage>
</organism>
<gene>
    <name type="primary">prt1</name>
    <name type="ORF">ACLA_032480</name>
</gene>
<name>EIF3B_ASPCL</name>
<accession>A1CS92</accession>
<feature type="chain" id="PRO_0000363807" description="Eukaryotic translation initiation factor 3 subunit B">
    <location>
        <begin position="1"/>
        <end position="741"/>
    </location>
</feature>
<feature type="domain" description="RRM" evidence="1">
    <location>
        <begin position="40"/>
        <end position="126"/>
    </location>
</feature>
<feature type="repeat" description="WD 1">
    <location>
        <begin position="193"/>
        <end position="230"/>
    </location>
</feature>
<feature type="repeat" description="WD 2">
    <location>
        <begin position="232"/>
        <end position="289"/>
    </location>
</feature>
<feature type="repeat" description="WD 3">
    <location>
        <begin position="303"/>
        <end position="344"/>
    </location>
</feature>
<feature type="repeat" description="WD 4">
    <location>
        <begin position="514"/>
        <end position="557"/>
    </location>
</feature>
<feature type="repeat" description="WD 5">
    <location>
        <begin position="572"/>
        <end position="610"/>
    </location>
</feature>
<feature type="region of interest" description="Disordered" evidence="2">
    <location>
        <begin position="1"/>
        <end position="22"/>
    </location>
</feature>
<feature type="region of interest" description="Disordered" evidence="2">
    <location>
        <begin position="695"/>
        <end position="722"/>
    </location>
</feature>
<feature type="compositionally biased region" description="Polar residues" evidence="2">
    <location>
        <begin position="1"/>
        <end position="10"/>
    </location>
</feature>
<feature type="compositionally biased region" description="Acidic residues" evidence="2">
    <location>
        <begin position="13"/>
        <end position="22"/>
    </location>
</feature>
<protein>
    <recommendedName>
        <fullName evidence="1">Eukaryotic translation initiation factor 3 subunit B</fullName>
        <shortName evidence="1">eIF3b</shortName>
    </recommendedName>
    <alternativeName>
        <fullName evidence="1">Eukaryotic translation initiation factor 3 90 kDa subunit homolog</fullName>
        <shortName evidence="1">eIF3 p90</shortName>
    </alternativeName>
    <alternativeName>
        <fullName>Translation initiation factor eIF3 p90 subunit homolog</fullName>
    </alternativeName>
</protein>
<keyword id="KW-0963">Cytoplasm</keyword>
<keyword id="KW-0396">Initiation factor</keyword>
<keyword id="KW-0648">Protein biosynthesis</keyword>
<keyword id="KW-1185">Reference proteome</keyword>
<keyword id="KW-0677">Repeat</keyword>
<keyword id="KW-0694">RNA-binding</keyword>
<keyword id="KW-0853">WD repeat</keyword>
<evidence type="ECO:0000255" key="1">
    <source>
        <dbReference type="HAMAP-Rule" id="MF_03001"/>
    </source>
</evidence>
<evidence type="ECO:0000256" key="2">
    <source>
        <dbReference type="SAM" id="MobiDB-lite"/>
    </source>
</evidence>
<proteinExistence type="inferred from homology"/>
<reference key="1">
    <citation type="journal article" date="2008" name="PLoS Genet.">
        <title>Genomic islands in the pathogenic filamentous fungus Aspergillus fumigatus.</title>
        <authorList>
            <person name="Fedorova N.D."/>
            <person name="Khaldi N."/>
            <person name="Joardar V.S."/>
            <person name="Maiti R."/>
            <person name="Amedeo P."/>
            <person name="Anderson M.J."/>
            <person name="Crabtree J."/>
            <person name="Silva J.C."/>
            <person name="Badger J.H."/>
            <person name="Albarraq A."/>
            <person name="Angiuoli S."/>
            <person name="Bussey H."/>
            <person name="Bowyer P."/>
            <person name="Cotty P.J."/>
            <person name="Dyer P.S."/>
            <person name="Egan A."/>
            <person name="Galens K."/>
            <person name="Fraser-Liggett C.M."/>
            <person name="Haas B.J."/>
            <person name="Inman J.M."/>
            <person name="Kent R."/>
            <person name="Lemieux S."/>
            <person name="Malavazi I."/>
            <person name="Orvis J."/>
            <person name="Roemer T."/>
            <person name="Ronning C.M."/>
            <person name="Sundaram J.P."/>
            <person name="Sutton G."/>
            <person name="Turner G."/>
            <person name="Venter J.C."/>
            <person name="White O.R."/>
            <person name="Whitty B.R."/>
            <person name="Youngman P."/>
            <person name="Wolfe K.H."/>
            <person name="Goldman G.H."/>
            <person name="Wortman J.R."/>
            <person name="Jiang B."/>
            <person name="Denning D.W."/>
            <person name="Nierman W.C."/>
        </authorList>
    </citation>
    <scope>NUCLEOTIDE SEQUENCE [LARGE SCALE GENOMIC DNA]</scope>
    <source>
        <strain>ATCC 1007 / CBS 513.65 / DSM 816 / NCTC 3887 / NRRL 1 / QM 1276 / 107</strain>
    </source>
</reference>
<comment type="function">
    <text evidence="1">RNA-binding component of the eukaryotic translation initiation factor 3 (eIF-3) complex, which is involved in protein synthesis of a specialized repertoire of mRNAs and, together with other initiation factors, stimulates binding of mRNA and methionyl-tRNAi to the 40S ribosome. The eIF-3 complex specifically targets and initiates translation of a subset of mRNAs involved in cell proliferation.</text>
</comment>
<comment type="subunit">
    <text evidence="1">Component of the eukaryotic translation initiation factor 3 (eIF-3) complex.</text>
</comment>
<comment type="subcellular location">
    <subcellularLocation>
        <location evidence="1">Cytoplasm</location>
    </subcellularLocation>
</comment>
<comment type="similarity">
    <text evidence="1">Belongs to the eIF-3 subunit B family.</text>
</comment>
<dbReference type="EMBL" id="DS027059">
    <property type="protein sequence ID" value="EAW08513.1"/>
    <property type="molecule type" value="Genomic_DNA"/>
</dbReference>
<dbReference type="RefSeq" id="XP_001269939.1">
    <property type="nucleotide sequence ID" value="XM_001269938.1"/>
</dbReference>
<dbReference type="SMR" id="A1CS92"/>
<dbReference type="STRING" id="344612.A1CS92"/>
<dbReference type="EnsemblFungi" id="EAW08513">
    <property type="protein sequence ID" value="EAW08513"/>
    <property type="gene ID" value="ACLA_032480"/>
</dbReference>
<dbReference type="GeneID" id="4701103"/>
<dbReference type="KEGG" id="act:ACLA_032480"/>
<dbReference type="VEuPathDB" id="FungiDB:ACLA_032480"/>
<dbReference type="eggNOG" id="KOG2314">
    <property type="taxonomic scope" value="Eukaryota"/>
</dbReference>
<dbReference type="HOGENOM" id="CLU_011152_4_0_1"/>
<dbReference type="OMA" id="LWGGPQF"/>
<dbReference type="OrthoDB" id="10250414at2759"/>
<dbReference type="Proteomes" id="UP000006701">
    <property type="component" value="Unassembled WGS sequence"/>
</dbReference>
<dbReference type="GO" id="GO:0010494">
    <property type="term" value="C:cytoplasmic stress granule"/>
    <property type="evidence" value="ECO:0007669"/>
    <property type="project" value="EnsemblFungi"/>
</dbReference>
<dbReference type="GO" id="GO:0016282">
    <property type="term" value="C:eukaryotic 43S preinitiation complex"/>
    <property type="evidence" value="ECO:0007669"/>
    <property type="project" value="UniProtKB-UniRule"/>
</dbReference>
<dbReference type="GO" id="GO:0033290">
    <property type="term" value="C:eukaryotic 48S preinitiation complex"/>
    <property type="evidence" value="ECO:0007669"/>
    <property type="project" value="UniProtKB-UniRule"/>
</dbReference>
<dbReference type="GO" id="GO:0071540">
    <property type="term" value="C:eukaryotic translation initiation factor 3 complex, eIF3e"/>
    <property type="evidence" value="ECO:0007669"/>
    <property type="project" value="EnsemblFungi"/>
</dbReference>
<dbReference type="GO" id="GO:0071541">
    <property type="term" value="C:eukaryotic translation initiation factor 3 complex, eIF3m"/>
    <property type="evidence" value="ECO:0007669"/>
    <property type="project" value="EnsemblFungi"/>
</dbReference>
<dbReference type="GO" id="GO:0043614">
    <property type="term" value="C:multi-eIF complex"/>
    <property type="evidence" value="ECO:0007669"/>
    <property type="project" value="EnsemblFungi"/>
</dbReference>
<dbReference type="GO" id="GO:0042802">
    <property type="term" value="F:identical protein binding"/>
    <property type="evidence" value="ECO:0007669"/>
    <property type="project" value="EnsemblFungi"/>
</dbReference>
<dbReference type="GO" id="GO:0003723">
    <property type="term" value="F:RNA binding"/>
    <property type="evidence" value="ECO:0007669"/>
    <property type="project" value="UniProtKB-UniRule"/>
</dbReference>
<dbReference type="GO" id="GO:0003743">
    <property type="term" value="F:translation initiation factor activity"/>
    <property type="evidence" value="ECO:0007669"/>
    <property type="project" value="UniProtKB-UniRule"/>
</dbReference>
<dbReference type="GO" id="GO:0031369">
    <property type="term" value="F:translation initiation factor binding"/>
    <property type="evidence" value="ECO:0007669"/>
    <property type="project" value="InterPro"/>
</dbReference>
<dbReference type="GO" id="GO:0001732">
    <property type="term" value="P:formation of cytoplasmic translation initiation complex"/>
    <property type="evidence" value="ECO:0007669"/>
    <property type="project" value="UniProtKB-UniRule"/>
</dbReference>
<dbReference type="CDD" id="cd12278">
    <property type="entry name" value="RRM_eIF3B"/>
    <property type="match status" value="1"/>
</dbReference>
<dbReference type="FunFam" id="2.130.10.10:FF:000419">
    <property type="entry name" value="Eukaryotic translation initiation factor 3 subunit B"/>
    <property type="match status" value="1"/>
</dbReference>
<dbReference type="FunFam" id="3.30.70.330:FF:000235">
    <property type="entry name" value="Eukaryotic translation initiation factor 3 subunit B"/>
    <property type="match status" value="1"/>
</dbReference>
<dbReference type="Gene3D" id="3.30.70.330">
    <property type="match status" value="1"/>
</dbReference>
<dbReference type="Gene3D" id="2.130.10.10">
    <property type="entry name" value="YVTN repeat-like/Quinoprotein amine dehydrogenase"/>
    <property type="match status" value="2"/>
</dbReference>
<dbReference type="HAMAP" id="MF_03001">
    <property type="entry name" value="eIF3b"/>
    <property type="match status" value="1"/>
</dbReference>
<dbReference type="InterPro" id="IPR011400">
    <property type="entry name" value="EIF3B"/>
</dbReference>
<dbReference type="InterPro" id="IPR034363">
    <property type="entry name" value="eIF3B_RRM"/>
</dbReference>
<dbReference type="InterPro" id="IPR012677">
    <property type="entry name" value="Nucleotide-bd_a/b_plait_sf"/>
</dbReference>
<dbReference type="InterPro" id="IPR035979">
    <property type="entry name" value="RBD_domain_sf"/>
</dbReference>
<dbReference type="InterPro" id="IPR000504">
    <property type="entry name" value="RRM_dom"/>
</dbReference>
<dbReference type="InterPro" id="IPR013979">
    <property type="entry name" value="TIF_beta_prop-like"/>
</dbReference>
<dbReference type="InterPro" id="IPR015943">
    <property type="entry name" value="WD40/YVTN_repeat-like_dom_sf"/>
</dbReference>
<dbReference type="PANTHER" id="PTHR14068">
    <property type="entry name" value="EUKARYOTIC TRANSLATION INITIATION FACTOR 3 EIF3 -RELATED"/>
    <property type="match status" value="1"/>
</dbReference>
<dbReference type="PANTHER" id="PTHR14068:SF0">
    <property type="entry name" value="EUKARYOTIC TRANSLATION INITIATION FACTOR 3 SUBUNIT B"/>
    <property type="match status" value="1"/>
</dbReference>
<dbReference type="Pfam" id="PF08662">
    <property type="entry name" value="eIF2A"/>
    <property type="match status" value="1"/>
</dbReference>
<dbReference type="Pfam" id="PF00076">
    <property type="entry name" value="RRM_1"/>
    <property type="match status" value="1"/>
</dbReference>
<dbReference type="PIRSF" id="PIRSF036424">
    <property type="entry name" value="eIF3b"/>
    <property type="match status" value="1"/>
</dbReference>
<dbReference type="SMART" id="SM00360">
    <property type="entry name" value="RRM"/>
    <property type="match status" value="1"/>
</dbReference>
<dbReference type="SUPFAM" id="SSF54928">
    <property type="entry name" value="RNA-binding domain, RBD"/>
    <property type="match status" value="1"/>
</dbReference>
<dbReference type="SUPFAM" id="SSF69322">
    <property type="entry name" value="Tricorn protease domain 2"/>
    <property type="match status" value="1"/>
</dbReference>
<dbReference type="PROSITE" id="PS50102">
    <property type="entry name" value="RRM"/>
    <property type="match status" value="1"/>
</dbReference>
<sequence>MAPSFDTLSEQDLHEEEEEEIDVSDLKAQYEVKLEEGLDTFVVIDGLPVVPEESRQKLVKFLMRKLNTVGHTSEDAVFMPVNDKNMSEGYAFVEYETPEQAVAAVKQLHGTPLDKKHTLLVNKLMDIERYGREGRIDEEYKPPTIEPFKEKEHLRSWLSDPNARDQFALYRGDKVGVFWNNKNNPPENVVDRAHWTQLFVQWSPKGTFLASVHPQGVQLWGGPAFSKQKQFPHPFVQLIEFSPGESYLTTWSARPIQVEEGQPILSYEEDGKNIIVWDIETGKPLRSFVSHDLSAPGGESDAQPKKKVQWPAFKWSADEKYVARMLQGQSISIYELPRMNLLGKTSVKVDGVMDFEWSPATVNREGVKQYEQLLCFWTPEIGSNPARVAMMSVPSKEIVRTRNLFNVSDVKLHWQSQGSFVCVKVDRHSKSKKSMATNLEIFRVREKGVPVEVVDSLKDTVINFAWEPNGSRFVLITNGETVAGAAVAPKTAVSFFAREKKGGAAGNFKLVRTIEKKNSNAIYWSPKGRFVVVATVHSQTSFDMDFWDMDFEGEKPEAEKDLTANVQLMKTLEHYGVTDIDWDPTGRYVVSSASAWTHSLENGWNMHTFSGNTLSENPTEKFKQFLWRPRPPTFLSKEEQKQVRKNLREYSKEFDEEDRYAVDIANTAVVEKRKRVLSEWIAWIRREKELLSEDKDAYGLPEDVDDPKKAKDAPAVTSEQGEAVVEEIVEEIVEESEEVIG</sequence>